<feature type="chain" id="PRO_0000207212" description="Leucyl/phenylalanyl-tRNA--protein transferase">
    <location>
        <begin position="1"/>
        <end position="194"/>
    </location>
</feature>
<comment type="function">
    <text evidence="1">Functions in the N-end rule pathway of protein degradation where it conjugates Leu, Phe and, less efficiently, Met from aminoacyl-tRNAs to the N-termini of proteins containing an N-terminal arginine or lysine.</text>
</comment>
<comment type="catalytic activity">
    <reaction evidence="1">
        <text>N-terminal L-lysyl-[protein] + L-leucyl-tRNA(Leu) = N-terminal L-leucyl-L-lysyl-[protein] + tRNA(Leu) + H(+)</text>
        <dbReference type="Rhea" id="RHEA:12340"/>
        <dbReference type="Rhea" id="RHEA-COMP:9613"/>
        <dbReference type="Rhea" id="RHEA-COMP:9622"/>
        <dbReference type="Rhea" id="RHEA-COMP:12670"/>
        <dbReference type="Rhea" id="RHEA-COMP:12671"/>
        <dbReference type="ChEBI" id="CHEBI:15378"/>
        <dbReference type="ChEBI" id="CHEBI:65249"/>
        <dbReference type="ChEBI" id="CHEBI:78442"/>
        <dbReference type="ChEBI" id="CHEBI:78494"/>
        <dbReference type="ChEBI" id="CHEBI:133043"/>
        <dbReference type="EC" id="2.3.2.6"/>
    </reaction>
</comment>
<comment type="catalytic activity">
    <reaction evidence="1">
        <text>N-terminal L-arginyl-[protein] + L-leucyl-tRNA(Leu) = N-terminal L-leucyl-L-arginyl-[protein] + tRNA(Leu) + H(+)</text>
        <dbReference type="Rhea" id="RHEA:50416"/>
        <dbReference type="Rhea" id="RHEA-COMP:9613"/>
        <dbReference type="Rhea" id="RHEA-COMP:9622"/>
        <dbReference type="Rhea" id="RHEA-COMP:12672"/>
        <dbReference type="Rhea" id="RHEA-COMP:12673"/>
        <dbReference type="ChEBI" id="CHEBI:15378"/>
        <dbReference type="ChEBI" id="CHEBI:64719"/>
        <dbReference type="ChEBI" id="CHEBI:78442"/>
        <dbReference type="ChEBI" id="CHEBI:78494"/>
        <dbReference type="ChEBI" id="CHEBI:133044"/>
        <dbReference type="EC" id="2.3.2.6"/>
    </reaction>
</comment>
<comment type="catalytic activity">
    <reaction evidence="1">
        <text>L-phenylalanyl-tRNA(Phe) + an N-terminal L-alpha-aminoacyl-[protein] = an N-terminal L-phenylalanyl-L-alpha-aminoacyl-[protein] + tRNA(Phe)</text>
        <dbReference type="Rhea" id="RHEA:43632"/>
        <dbReference type="Rhea" id="RHEA-COMP:9668"/>
        <dbReference type="Rhea" id="RHEA-COMP:9699"/>
        <dbReference type="Rhea" id="RHEA-COMP:10636"/>
        <dbReference type="Rhea" id="RHEA-COMP:10637"/>
        <dbReference type="ChEBI" id="CHEBI:78442"/>
        <dbReference type="ChEBI" id="CHEBI:78531"/>
        <dbReference type="ChEBI" id="CHEBI:78597"/>
        <dbReference type="ChEBI" id="CHEBI:83561"/>
        <dbReference type="EC" id="2.3.2.6"/>
    </reaction>
</comment>
<comment type="subcellular location">
    <subcellularLocation>
        <location evidence="1">Cytoplasm</location>
    </subcellularLocation>
</comment>
<comment type="similarity">
    <text evidence="1">Belongs to the L/F-transferase family.</text>
</comment>
<proteinExistence type="inferred from homology"/>
<evidence type="ECO:0000255" key="1">
    <source>
        <dbReference type="HAMAP-Rule" id="MF_00688"/>
    </source>
</evidence>
<organism>
    <name type="scientific">Chlorobaculum tepidum (strain ATCC 49652 / DSM 12025 / NBRC 103806 / TLS)</name>
    <name type="common">Chlorobium tepidum</name>
    <dbReference type="NCBI Taxonomy" id="194439"/>
    <lineage>
        <taxon>Bacteria</taxon>
        <taxon>Pseudomonadati</taxon>
        <taxon>Chlorobiota</taxon>
        <taxon>Chlorobiia</taxon>
        <taxon>Chlorobiales</taxon>
        <taxon>Chlorobiaceae</taxon>
        <taxon>Chlorobaculum</taxon>
    </lineage>
</organism>
<keyword id="KW-0012">Acyltransferase</keyword>
<keyword id="KW-0963">Cytoplasm</keyword>
<keyword id="KW-1185">Reference proteome</keyword>
<keyword id="KW-0808">Transferase</keyword>
<reference key="1">
    <citation type="journal article" date="2002" name="Proc. Natl. Acad. Sci. U.S.A.">
        <title>The complete genome sequence of Chlorobium tepidum TLS, a photosynthetic, anaerobic, green-sulfur bacterium.</title>
        <authorList>
            <person name="Eisen J.A."/>
            <person name="Nelson K.E."/>
            <person name="Paulsen I.T."/>
            <person name="Heidelberg J.F."/>
            <person name="Wu M."/>
            <person name="Dodson R.J."/>
            <person name="DeBoy R.T."/>
            <person name="Gwinn M.L."/>
            <person name="Nelson W.C."/>
            <person name="Haft D.H."/>
            <person name="Hickey E.K."/>
            <person name="Peterson J.D."/>
            <person name="Durkin A.S."/>
            <person name="Kolonay J.F."/>
            <person name="Yang F."/>
            <person name="Holt I.E."/>
            <person name="Umayam L.A."/>
            <person name="Mason T.M."/>
            <person name="Brenner M."/>
            <person name="Shea T.P."/>
            <person name="Parksey D.S."/>
            <person name="Nierman W.C."/>
            <person name="Feldblyum T.V."/>
            <person name="Hansen C.L."/>
            <person name="Craven M.B."/>
            <person name="Radune D."/>
            <person name="Vamathevan J.J."/>
            <person name="Khouri H.M."/>
            <person name="White O."/>
            <person name="Gruber T.M."/>
            <person name="Ketchum K.A."/>
            <person name="Venter J.C."/>
            <person name="Tettelin H."/>
            <person name="Bryant D.A."/>
            <person name="Fraser C.M."/>
        </authorList>
    </citation>
    <scope>NUCLEOTIDE SEQUENCE [LARGE SCALE GENOMIC DNA]</scope>
    <source>
        <strain>ATCC 49652 / DSM 12025 / NBRC 103806 / TLS</strain>
    </source>
</reference>
<name>LFTR_CHLTE</name>
<sequence length="194" mass="22136">MIKVEDILRAYRHGFFPMADSREGTVSWCQPYQRAVVPLDSFRPSRSLRRVIGKKRFTIKINSVFEQVIRACSQPRSTGQETWLSEEIIKVFLKLHRLGVAHSVESWQDGELAGGLYGLSMGGAFFGESMFFFRSDASKVAFAWLVGYLKRKGYLLLDAQIMNPHLESLGAIEIPHEEYMVQLERALGKKISFV</sequence>
<accession>Q8KFI0</accession>
<dbReference type="EC" id="2.3.2.6" evidence="1"/>
<dbReference type="EMBL" id="AE006470">
    <property type="protein sequence ID" value="AAM71592.1"/>
    <property type="molecule type" value="Genomic_DNA"/>
</dbReference>
<dbReference type="RefSeq" id="NP_661250.1">
    <property type="nucleotide sequence ID" value="NC_002932.3"/>
</dbReference>
<dbReference type="RefSeq" id="WP_010932038.1">
    <property type="nucleotide sequence ID" value="NC_002932.3"/>
</dbReference>
<dbReference type="SMR" id="Q8KFI0"/>
<dbReference type="STRING" id="194439.CT0346"/>
<dbReference type="EnsemblBacteria" id="AAM71592">
    <property type="protein sequence ID" value="AAM71592"/>
    <property type="gene ID" value="CT0346"/>
</dbReference>
<dbReference type="KEGG" id="cte:CT0346"/>
<dbReference type="PATRIC" id="fig|194439.7.peg.335"/>
<dbReference type="eggNOG" id="COG2360">
    <property type="taxonomic scope" value="Bacteria"/>
</dbReference>
<dbReference type="HOGENOM" id="CLU_075045_1_1_10"/>
<dbReference type="OrthoDB" id="9790282at2"/>
<dbReference type="Proteomes" id="UP000001007">
    <property type="component" value="Chromosome"/>
</dbReference>
<dbReference type="GO" id="GO:0005737">
    <property type="term" value="C:cytoplasm"/>
    <property type="evidence" value="ECO:0007669"/>
    <property type="project" value="UniProtKB-SubCell"/>
</dbReference>
<dbReference type="GO" id="GO:0008914">
    <property type="term" value="F:leucyl-tRNA--protein transferase activity"/>
    <property type="evidence" value="ECO:0007669"/>
    <property type="project" value="UniProtKB-UniRule"/>
</dbReference>
<dbReference type="GO" id="GO:0030163">
    <property type="term" value="P:protein catabolic process"/>
    <property type="evidence" value="ECO:0007669"/>
    <property type="project" value="UniProtKB-UniRule"/>
</dbReference>
<dbReference type="Gene3D" id="3.40.630.70">
    <property type="entry name" value="Leucyl/phenylalanyl-tRNA-protein transferase, C-terminal domain"/>
    <property type="match status" value="1"/>
</dbReference>
<dbReference type="HAMAP" id="MF_00688">
    <property type="entry name" value="Leu_Phe_trans"/>
    <property type="match status" value="1"/>
</dbReference>
<dbReference type="InterPro" id="IPR016181">
    <property type="entry name" value="Acyl_CoA_acyltransferase"/>
</dbReference>
<dbReference type="InterPro" id="IPR004616">
    <property type="entry name" value="Leu/Phe-tRNA_Trfase"/>
</dbReference>
<dbReference type="InterPro" id="IPR042203">
    <property type="entry name" value="Leu/Phe-tRNA_Trfase_C"/>
</dbReference>
<dbReference type="NCBIfam" id="TIGR00667">
    <property type="entry name" value="aat"/>
    <property type="match status" value="1"/>
</dbReference>
<dbReference type="PANTHER" id="PTHR30098">
    <property type="entry name" value="LEUCYL/PHENYLALANYL-TRNA--PROTEIN TRANSFERASE"/>
    <property type="match status" value="1"/>
</dbReference>
<dbReference type="PANTHER" id="PTHR30098:SF2">
    <property type="entry name" value="LEUCYL_PHENYLALANYL-TRNA--PROTEIN TRANSFERASE"/>
    <property type="match status" value="1"/>
</dbReference>
<dbReference type="Pfam" id="PF03588">
    <property type="entry name" value="Leu_Phe_trans"/>
    <property type="match status" value="1"/>
</dbReference>
<dbReference type="SUPFAM" id="SSF55729">
    <property type="entry name" value="Acyl-CoA N-acyltransferases (Nat)"/>
    <property type="match status" value="1"/>
</dbReference>
<gene>
    <name evidence="1" type="primary">aat</name>
    <name type="ordered locus">CT0346</name>
</gene>
<protein>
    <recommendedName>
        <fullName evidence="1">Leucyl/phenylalanyl-tRNA--protein transferase</fullName>
        <ecNumber evidence="1">2.3.2.6</ecNumber>
    </recommendedName>
    <alternativeName>
        <fullName evidence="1">L/F-transferase</fullName>
    </alternativeName>
    <alternativeName>
        <fullName evidence="1">Leucyltransferase</fullName>
    </alternativeName>
    <alternativeName>
        <fullName evidence="1">Phenyalanyltransferase</fullName>
    </alternativeName>
</protein>